<reference key="1">
    <citation type="journal article" date="2010" name="ISME J.">
        <title>The complete genome sequence of the algal symbiont Dinoroseobacter shibae: a hitchhiker's guide to life in the sea.</title>
        <authorList>
            <person name="Wagner-Dobler I."/>
            <person name="Ballhausen B."/>
            <person name="Berger M."/>
            <person name="Brinkhoff T."/>
            <person name="Buchholz I."/>
            <person name="Bunk B."/>
            <person name="Cypionka H."/>
            <person name="Daniel R."/>
            <person name="Drepper T."/>
            <person name="Gerdts G."/>
            <person name="Hahnke S."/>
            <person name="Han C."/>
            <person name="Jahn D."/>
            <person name="Kalhoefer D."/>
            <person name="Kiss H."/>
            <person name="Klenk H.P."/>
            <person name="Kyrpides N."/>
            <person name="Liebl W."/>
            <person name="Liesegang H."/>
            <person name="Meincke L."/>
            <person name="Pati A."/>
            <person name="Petersen J."/>
            <person name="Piekarski T."/>
            <person name="Pommerenke C."/>
            <person name="Pradella S."/>
            <person name="Pukall R."/>
            <person name="Rabus R."/>
            <person name="Stackebrandt E."/>
            <person name="Thole S."/>
            <person name="Thompson L."/>
            <person name="Tielen P."/>
            <person name="Tomasch J."/>
            <person name="von Jan M."/>
            <person name="Wanphrut N."/>
            <person name="Wichels A."/>
            <person name="Zech H."/>
            <person name="Simon M."/>
        </authorList>
    </citation>
    <scope>NUCLEOTIDE SEQUENCE [LARGE SCALE GENOMIC DNA]</scope>
    <source>
        <strain>DSM 16493 / NCIMB 14021 / DFL 12</strain>
    </source>
</reference>
<comment type="function">
    <text evidence="1">Together with the chaperonin GroEL, plays an essential role in assisting protein folding. The GroEL-GroES system forms a nano-cage that allows encapsulation of the non-native substrate proteins and provides a physical environment optimized to promote and accelerate protein folding. GroES binds to the apical surface of the GroEL ring, thereby capping the opening of the GroEL channel.</text>
</comment>
<comment type="subunit">
    <text evidence="1">Heptamer of 7 subunits arranged in a ring. Interacts with the chaperonin GroEL.</text>
</comment>
<comment type="subcellular location">
    <subcellularLocation>
        <location evidence="1">Cytoplasm</location>
    </subcellularLocation>
</comment>
<comment type="similarity">
    <text evidence="1">Belongs to the GroES chaperonin family.</text>
</comment>
<sequence>MAFTPLHDRVLVRRVESEEKTAGGLIIPDSAKEKPAEGLVIAVGAGAKDDDGDRIPMDVKEGDKILFGKWSGTEVTVDGEELLIMKESDILGIITDEAAAKAA</sequence>
<name>CH10_DINSH</name>
<accession>A8LJQ0</accession>
<feature type="chain" id="PRO_1000082374" description="Co-chaperonin GroES">
    <location>
        <begin position="1"/>
        <end position="103"/>
    </location>
</feature>
<proteinExistence type="inferred from homology"/>
<gene>
    <name evidence="1" type="primary">groES</name>
    <name evidence="1" type="synonym">groS</name>
    <name type="ordered locus">Dshi_2920</name>
</gene>
<keyword id="KW-0143">Chaperone</keyword>
<keyword id="KW-0963">Cytoplasm</keyword>
<keyword id="KW-1185">Reference proteome</keyword>
<organism>
    <name type="scientific">Dinoroseobacter shibae (strain DSM 16493 / NCIMB 14021 / DFL 12)</name>
    <dbReference type="NCBI Taxonomy" id="398580"/>
    <lineage>
        <taxon>Bacteria</taxon>
        <taxon>Pseudomonadati</taxon>
        <taxon>Pseudomonadota</taxon>
        <taxon>Alphaproteobacteria</taxon>
        <taxon>Rhodobacterales</taxon>
        <taxon>Roseobacteraceae</taxon>
        <taxon>Dinoroseobacter</taxon>
    </lineage>
</organism>
<dbReference type="EMBL" id="CP000830">
    <property type="protein sequence ID" value="ABV94653.1"/>
    <property type="molecule type" value="Genomic_DNA"/>
</dbReference>
<dbReference type="RefSeq" id="WP_012179581.1">
    <property type="nucleotide sequence ID" value="NC_009952.1"/>
</dbReference>
<dbReference type="SMR" id="A8LJQ0"/>
<dbReference type="STRING" id="398580.Dshi_2920"/>
<dbReference type="KEGG" id="dsh:Dshi_2920"/>
<dbReference type="eggNOG" id="COG0234">
    <property type="taxonomic scope" value="Bacteria"/>
</dbReference>
<dbReference type="HOGENOM" id="CLU_132825_1_0_5"/>
<dbReference type="OrthoDB" id="9806791at2"/>
<dbReference type="Proteomes" id="UP000006833">
    <property type="component" value="Chromosome"/>
</dbReference>
<dbReference type="GO" id="GO:0005737">
    <property type="term" value="C:cytoplasm"/>
    <property type="evidence" value="ECO:0007669"/>
    <property type="project" value="UniProtKB-SubCell"/>
</dbReference>
<dbReference type="GO" id="GO:0005524">
    <property type="term" value="F:ATP binding"/>
    <property type="evidence" value="ECO:0007669"/>
    <property type="project" value="InterPro"/>
</dbReference>
<dbReference type="GO" id="GO:0046872">
    <property type="term" value="F:metal ion binding"/>
    <property type="evidence" value="ECO:0007669"/>
    <property type="project" value="TreeGrafter"/>
</dbReference>
<dbReference type="GO" id="GO:0044183">
    <property type="term" value="F:protein folding chaperone"/>
    <property type="evidence" value="ECO:0007669"/>
    <property type="project" value="InterPro"/>
</dbReference>
<dbReference type="GO" id="GO:0051087">
    <property type="term" value="F:protein-folding chaperone binding"/>
    <property type="evidence" value="ECO:0007669"/>
    <property type="project" value="TreeGrafter"/>
</dbReference>
<dbReference type="GO" id="GO:0051082">
    <property type="term" value="F:unfolded protein binding"/>
    <property type="evidence" value="ECO:0007669"/>
    <property type="project" value="TreeGrafter"/>
</dbReference>
<dbReference type="GO" id="GO:0051085">
    <property type="term" value="P:chaperone cofactor-dependent protein refolding"/>
    <property type="evidence" value="ECO:0007669"/>
    <property type="project" value="TreeGrafter"/>
</dbReference>
<dbReference type="CDD" id="cd00320">
    <property type="entry name" value="cpn10"/>
    <property type="match status" value="1"/>
</dbReference>
<dbReference type="FunFam" id="2.30.33.40:FF:000001">
    <property type="entry name" value="10 kDa chaperonin"/>
    <property type="match status" value="1"/>
</dbReference>
<dbReference type="Gene3D" id="2.30.33.40">
    <property type="entry name" value="GroES chaperonin"/>
    <property type="match status" value="1"/>
</dbReference>
<dbReference type="HAMAP" id="MF_00580">
    <property type="entry name" value="CH10"/>
    <property type="match status" value="1"/>
</dbReference>
<dbReference type="InterPro" id="IPR020818">
    <property type="entry name" value="Chaperonin_GroES"/>
</dbReference>
<dbReference type="InterPro" id="IPR037124">
    <property type="entry name" value="Chaperonin_GroES_sf"/>
</dbReference>
<dbReference type="InterPro" id="IPR018369">
    <property type="entry name" value="Chaprnonin_Cpn10_CS"/>
</dbReference>
<dbReference type="InterPro" id="IPR011032">
    <property type="entry name" value="GroES-like_sf"/>
</dbReference>
<dbReference type="NCBIfam" id="NF001527">
    <property type="entry name" value="PRK00364.1-2"/>
    <property type="match status" value="1"/>
</dbReference>
<dbReference type="NCBIfam" id="NF001529">
    <property type="entry name" value="PRK00364.1-5"/>
    <property type="match status" value="1"/>
</dbReference>
<dbReference type="NCBIfam" id="NF001531">
    <property type="entry name" value="PRK00364.2-2"/>
    <property type="match status" value="1"/>
</dbReference>
<dbReference type="NCBIfam" id="NF001533">
    <property type="entry name" value="PRK00364.2-4"/>
    <property type="match status" value="1"/>
</dbReference>
<dbReference type="NCBIfam" id="NF001534">
    <property type="entry name" value="PRK00364.2-5"/>
    <property type="match status" value="1"/>
</dbReference>
<dbReference type="PANTHER" id="PTHR10772">
    <property type="entry name" value="10 KDA HEAT SHOCK PROTEIN"/>
    <property type="match status" value="1"/>
</dbReference>
<dbReference type="PANTHER" id="PTHR10772:SF58">
    <property type="entry name" value="CO-CHAPERONIN GROES"/>
    <property type="match status" value="1"/>
</dbReference>
<dbReference type="Pfam" id="PF00166">
    <property type="entry name" value="Cpn10"/>
    <property type="match status" value="1"/>
</dbReference>
<dbReference type="PRINTS" id="PR00297">
    <property type="entry name" value="CHAPERONIN10"/>
</dbReference>
<dbReference type="SMART" id="SM00883">
    <property type="entry name" value="Cpn10"/>
    <property type="match status" value="1"/>
</dbReference>
<dbReference type="SUPFAM" id="SSF50129">
    <property type="entry name" value="GroES-like"/>
    <property type="match status" value="1"/>
</dbReference>
<dbReference type="PROSITE" id="PS00681">
    <property type="entry name" value="CHAPERONINS_CPN10"/>
    <property type="match status" value="1"/>
</dbReference>
<protein>
    <recommendedName>
        <fullName evidence="1">Co-chaperonin GroES</fullName>
    </recommendedName>
    <alternativeName>
        <fullName evidence="1">10 kDa chaperonin</fullName>
    </alternativeName>
    <alternativeName>
        <fullName evidence="1">Chaperonin-10</fullName>
        <shortName evidence="1">Cpn10</shortName>
    </alternativeName>
</protein>
<evidence type="ECO:0000255" key="1">
    <source>
        <dbReference type="HAMAP-Rule" id="MF_00580"/>
    </source>
</evidence>